<sequence>MARHGPPWSRLDAQQERDVRELVRGVAGLQDEADPNFQLALNFAWSNFRFHRFLDVNSHKIEKTIEGIYEKFVIHSDLSKAASWKRLTEEFLNAPLPSIKEIKTDAHYSILSLLLCLSDSPSNSSYVETPRNKEVEKKDDFDWGKYLMEDEEMDIGPYMDTPNWSEESEEENDQQPLSREDSGIQVDRTPLEEQDQNRKLDPCISWKDEPDDRSWLEHHVVHQYWTARPSQFPHSLHLHSNLAAVWDQHLYSSDPLYVPDDRVLVTETQVIRETLWLLSGVKKLFIFQLIDGKVTVRNNIIVTHLTHSCLRSVLEQIAAYGQVVFRLQEFIDEVMGHSSESMLPGSGSVPKKSTEAPFRTYQAFMWALYKYFISFKEELAEIEKCIINNDTTITLAIVVDKLAPRLSQLKVLHKVFSTGVAEVPPDTRNVVRASHLLNTLYKAILEYDNVGEASEQTVSLLFSLWVETVRPYLQTVDEWIVHGHLWDGAREFIIQRNKNVPVNHRDFWYATYTLYSVSEKTENEEKMSDNASASSGSDQGPSSRQHTMVSFLKPVLKQIIMAGKSMQLLKNLQCAESTTCQAGARDAERKSLYTLFLESVQSRLRHGEDSTPQVLTEQQATKENLMKMQSIAESHLELDDVHDPLLAINFARMYLEQSDFHEKFAGGDVCVDRSSESVTCQTFELTLRSCLYPHIDKQYLDCCGNLMQTLKKDYRLVEYLQAMRNFFLMEGGDTMYDFYTSIFDKIREKETWQNVSFLNVQLQEAVGQRYPEDSSRLSISFENVDTAKKKLPVHILDGLTLSYKVPWPVDIVISLECQKIYNQVFLLLLQIKWAKYSLDVLLFGELVSTAEKPRLKEGLIHEQDTVAQFGPQKEPVRQQIHRMFLLRVKLMHFVNSLHNYIMTRILHSTGLEFQHQVEEAKDLDQLIKIHYRYLSTIHDRCLLREKVSFVKEAIMKVLNLALMFADGWQAGLGTWRMESIEKMESDFKNCHMFLVTILNKAVCRGSFPHLESLALSLMAGMEQS</sequence>
<dbReference type="EMBL" id="AF272884">
    <property type="protein sequence ID" value="AAK77662.1"/>
    <property type="molecule type" value="mRNA"/>
</dbReference>
<dbReference type="EMBL" id="AB067486">
    <property type="protein sequence ID" value="BAB67792.2"/>
    <property type="status" value="ALT_INIT"/>
    <property type="molecule type" value="mRNA"/>
</dbReference>
<dbReference type="EMBL" id="AK056416">
    <property type="status" value="NOT_ANNOTATED_CDS"/>
    <property type="molecule type" value="mRNA"/>
</dbReference>
<dbReference type="EMBL" id="AC116166">
    <property type="status" value="NOT_ANNOTATED_CDS"/>
    <property type="molecule type" value="Genomic_DNA"/>
</dbReference>
<dbReference type="EMBL" id="BC046182">
    <property type="protein sequence ID" value="AAH46182.1"/>
    <property type="status" value="ALT_INIT"/>
    <property type="molecule type" value="mRNA"/>
</dbReference>
<dbReference type="EMBL" id="BC071560">
    <property type="protein sequence ID" value="AAH71560.1"/>
    <property type="molecule type" value="mRNA"/>
</dbReference>
<dbReference type="CCDS" id="CCDS73697.1">
    <molecule id="Q96RT8-2"/>
</dbReference>
<dbReference type="CCDS" id="CCDS73698.1">
    <molecule id="Q96RT8-1"/>
</dbReference>
<dbReference type="RefSeq" id="NP_001096080.1">
    <molecule id="Q96RT8-2"/>
    <property type="nucleotide sequence ID" value="NM_001102610.2"/>
</dbReference>
<dbReference type="RefSeq" id="NP_443135.3">
    <molecule id="Q96RT8-1"/>
    <property type="nucleotide sequence ID" value="NM_052903.4"/>
</dbReference>
<dbReference type="PDB" id="6L81">
    <property type="method" value="X-ray"/>
    <property type="resolution" value="2.20 A"/>
    <property type="chains" value="A/C=1-119"/>
</dbReference>
<dbReference type="PDB" id="6V69">
    <property type="method" value="EM"/>
    <property type="resolution" value="4.20 A"/>
    <property type="chains" value="J=1-1024"/>
</dbReference>
<dbReference type="PDB" id="6V6S">
    <property type="method" value="EM"/>
    <property type="resolution" value="4.30 A"/>
    <property type="chains" value="J=1-1024"/>
</dbReference>
<dbReference type="PDB" id="7AS4">
    <property type="method" value="EM"/>
    <property type="resolution" value="4.13 A"/>
    <property type="chains" value="J=1-1024"/>
</dbReference>
<dbReference type="PDB" id="7QJ0">
    <property type="method" value="EM"/>
    <property type="resolution" value="5.32 A"/>
    <property type="chains" value="J/l=1-1024"/>
</dbReference>
<dbReference type="PDB" id="7QJ1">
    <property type="method" value="EM"/>
    <property type="resolution" value="7.00 A"/>
    <property type="chains" value="J/l=1-1024"/>
</dbReference>
<dbReference type="PDB" id="7QJ2">
    <property type="method" value="EM"/>
    <property type="resolution" value="8.60 A"/>
    <property type="chains" value="J/l=1-1024"/>
</dbReference>
<dbReference type="PDB" id="7QJ3">
    <property type="method" value="EM"/>
    <property type="resolution" value="7.60 A"/>
    <property type="chains" value="J/l=1-1024"/>
</dbReference>
<dbReference type="PDB" id="7QJ4">
    <property type="method" value="EM"/>
    <property type="resolution" value="9.00 A"/>
    <property type="chains" value="J/l=1-1024"/>
</dbReference>
<dbReference type="PDB" id="7QJ5">
    <property type="method" value="EM"/>
    <property type="resolution" value="8.70 A"/>
    <property type="chains" value="J/l=1-1024"/>
</dbReference>
<dbReference type="PDB" id="7QJ6">
    <property type="method" value="EM"/>
    <property type="resolution" value="7.80 A"/>
    <property type="chains" value="J/l=1-1024"/>
</dbReference>
<dbReference type="PDB" id="7QJ7">
    <property type="method" value="EM"/>
    <property type="resolution" value="8.70 A"/>
    <property type="chains" value="J/l=1-1024"/>
</dbReference>
<dbReference type="PDB" id="7QJ8">
    <property type="method" value="EM"/>
    <property type="resolution" value="8.70 A"/>
    <property type="chains" value="J/l=1-1024"/>
</dbReference>
<dbReference type="PDB" id="7QJ9">
    <property type="method" value="EM"/>
    <property type="resolution" value="8.10 A"/>
    <property type="chains" value="J/l=1-1024"/>
</dbReference>
<dbReference type="PDB" id="7QJA">
    <property type="method" value="EM"/>
    <property type="resolution" value="9.20 A"/>
    <property type="chains" value="J/l=1-1024"/>
</dbReference>
<dbReference type="PDB" id="7QJB">
    <property type="method" value="EM"/>
    <property type="resolution" value="9.20 A"/>
    <property type="chains" value="J/l=1-1024"/>
</dbReference>
<dbReference type="PDB" id="7QJC">
    <property type="method" value="EM"/>
    <property type="resolution" value="16.10 A"/>
    <property type="chains" value="J/l=1-1024"/>
</dbReference>
<dbReference type="PDB" id="7QJD">
    <property type="method" value="EM"/>
    <property type="resolution" value="7.10 A"/>
    <property type="chains" value="J/l=1-1024"/>
</dbReference>
<dbReference type="PDB" id="7QJE">
    <property type="method" value="EM"/>
    <property type="resolution" value="7.80 A"/>
    <property type="chains" value="J=1-1024"/>
</dbReference>
<dbReference type="PDB" id="8Q62">
    <property type="method" value="EM"/>
    <property type="resolution" value="3.72 A"/>
    <property type="chains" value="J=1-1024"/>
</dbReference>
<dbReference type="PDB" id="8RX1">
    <property type="method" value="EM"/>
    <property type="resolution" value="3.57 A"/>
    <property type="chains" value="J=1-1024"/>
</dbReference>
<dbReference type="PDB" id="8VRD">
    <property type="method" value="EM"/>
    <property type="resolution" value="7.00 A"/>
    <property type="chains" value="J=1-1024"/>
</dbReference>
<dbReference type="PDB" id="8VRJ">
    <property type="method" value="EM"/>
    <property type="resolution" value="7.70 A"/>
    <property type="chains" value="J=1-1024"/>
</dbReference>
<dbReference type="PDB" id="8VRK">
    <property type="method" value="EM"/>
    <property type="resolution" value="8.50 A"/>
    <property type="chains" value="J=1-1024"/>
</dbReference>
<dbReference type="PDBsum" id="6L81"/>
<dbReference type="PDBsum" id="6V69"/>
<dbReference type="PDBsum" id="6V6S"/>
<dbReference type="PDBsum" id="7AS4"/>
<dbReference type="PDBsum" id="7QJ0"/>
<dbReference type="PDBsum" id="7QJ1"/>
<dbReference type="PDBsum" id="7QJ2"/>
<dbReference type="PDBsum" id="7QJ3"/>
<dbReference type="PDBsum" id="7QJ4"/>
<dbReference type="PDBsum" id="7QJ5"/>
<dbReference type="PDBsum" id="7QJ6"/>
<dbReference type="PDBsum" id="7QJ7"/>
<dbReference type="PDBsum" id="7QJ8"/>
<dbReference type="PDBsum" id="7QJ9"/>
<dbReference type="PDBsum" id="7QJA"/>
<dbReference type="PDBsum" id="7QJB"/>
<dbReference type="PDBsum" id="7QJC"/>
<dbReference type="PDBsum" id="7QJD"/>
<dbReference type="PDBsum" id="7QJE"/>
<dbReference type="PDBsum" id="8Q62"/>
<dbReference type="PDBsum" id="8RX1"/>
<dbReference type="PDBsum" id="8VRD"/>
<dbReference type="PDBsum" id="8VRJ"/>
<dbReference type="PDBsum" id="8VRK"/>
<dbReference type="EMDB" id="EMD-11888"/>
<dbReference type="EMDB" id="EMD-14005"/>
<dbReference type="EMDB" id="EMD-14006"/>
<dbReference type="EMDB" id="EMD-14007"/>
<dbReference type="EMDB" id="EMD-14008"/>
<dbReference type="EMDB" id="EMD-14009"/>
<dbReference type="EMDB" id="EMD-14010"/>
<dbReference type="EMDB" id="EMD-14011"/>
<dbReference type="EMDB" id="EMD-14012"/>
<dbReference type="EMDB" id="EMD-14013"/>
<dbReference type="EMDB" id="EMD-14014"/>
<dbReference type="EMDB" id="EMD-14015"/>
<dbReference type="EMDB" id="EMD-14016"/>
<dbReference type="EMDB" id="EMD-14017"/>
<dbReference type="EMDB" id="EMD-14018"/>
<dbReference type="EMDB" id="EMD-14019"/>
<dbReference type="EMDB" id="EMD-18181"/>
<dbReference type="EMDB" id="EMD-18182"/>
<dbReference type="EMDB" id="EMD-19570"/>
<dbReference type="EMDB" id="EMD-21060"/>
<dbReference type="EMDB" id="EMD-21073"/>
<dbReference type="EMDB" id="EMD-43481"/>
<dbReference type="EMDB" id="EMD-43482"/>
<dbReference type="EMDB" id="EMD-43483"/>
<dbReference type="SMR" id="Q96RT8"/>
<dbReference type="BioGRID" id="125353">
    <property type="interactions" value="64"/>
</dbReference>
<dbReference type="CORUM" id="Q96RT8"/>
<dbReference type="FunCoup" id="Q96RT8">
    <property type="interactions" value="1411"/>
</dbReference>
<dbReference type="IntAct" id="Q96RT8">
    <property type="interactions" value="53"/>
</dbReference>
<dbReference type="MINT" id="Q96RT8"/>
<dbReference type="STRING" id="9606.ENSP00000480316"/>
<dbReference type="GlyGen" id="Q96RT8">
    <property type="glycosylation" value="2 sites, 1 O-linked glycan (2 sites)"/>
</dbReference>
<dbReference type="iPTMnet" id="Q96RT8"/>
<dbReference type="PhosphoSitePlus" id="Q96RT8"/>
<dbReference type="BioMuta" id="TUBGCP5"/>
<dbReference type="DMDM" id="20454926"/>
<dbReference type="jPOST" id="Q96RT8"/>
<dbReference type="MassIVE" id="Q96RT8"/>
<dbReference type="PaxDb" id="9606-ENSP00000480316"/>
<dbReference type="PeptideAtlas" id="Q96RT8"/>
<dbReference type="ProteomicsDB" id="19119"/>
<dbReference type="ProteomicsDB" id="78032">
    <molecule id="Q96RT8-1"/>
</dbReference>
<dbReference type="Pumba" id="Q96RT8"/>
<dbReference type="Antibodypedia" id="72633">
    <property type="antibodies" value="149 antibodies from 27 providers"/>
</dbReference>
<dbReference type="DNASU" id="114791"/>
<dbReference type="Ensembl" id="ENST00000615383.5">
    <molecule id="Q96RT8-1"/>
    <property type="protein sequence ID" value="ENSP00000480316.1"/>
    <property type="gene ID" value="ENSG00000275835.5"/>
</dbReference>
<dbReference type="Ensembl" id="ENST00000620435.4">
    <molecule id="Q96RT8-2"/>
    <property type="protein sequence ID" value="ENSP00000481853.1"/>
    <property type="gene ID" value="ENSG00000275835.5"/>
</dbReference>
<dbReference type="GeneID" id="114791"/>
<dbReference type="KEGG" id="hsa:114791"/>
<dbReference type="MANE-Select" id="ENST00000615383.5">
    <property type="protein sequence ID" value="ENSP00000480316.1"/>
    <property type="RefSeq nucleotide sequence ID" value="NM_052903.6"/>
    <property type="RefSeq protein sequence ID" value="NP_443135.3"/>
</dbReference>
<dbReference type="UCSC" id="uc001yuq.3">
    <molecule id="Q96RT8-1"/>
    <property type="organism name" value="human"/>
</dbReference>
<dbReference type="AGR" id="HGNC:18600"/>
<dbReference type="CTD" id="114791"/>
<dbReference type="DisGeNET" id="114791"/>
<dbReference type="GeneCards" id="TUBGCP5"/>
<dbReference type="HGNC" id="HGNC:18600">
    <property type="gene designation" value="TUBGCP5"/>
</dbReference>
<dbReference type="HPA" id="ENSG00000275835">
    <property type="expression patterns" value="Low tissue specificity"/>
</dbReference>
<dbReference type="MalaCards" id="TUBGCP5"/>
<dbReference type="MIM" id="608147">
    <property type="type" value="gene"/>
</dbReference>
<dbReference type="neXtProt" id="NX_Q96RT8"/>
<dbReference type="OpenTargets" id="ENSG00000275835"/>
<dbReference type="PharmGKB" id="PA38599"/>
<dbReference type="VEuPathDB" id="HostDB:ENSG00000275835"/>
<dbReference type="eggNOG" id="KOG4344">
    <property type="taxonomic scope" value="Eukaryota"/>
</dbReference>
<dbReference type="GeneTree" id="ENSGT00940000155962"/>
<dbReference type="HOGENOM" id="CLU_011574_0_0_1"/>
<dbReference type="InParanoid" id="Q96RT8"/>
<dbReference type="OMA" id="RTNQFEV"/>
<dbReference type="OrthoDB" id="66546at2759"/>
<dbReference type="PAN-GO" id="Q96RT8">
    <property type="GO annotations" value="10 GO annotations based on evolutionary models"/>
</dbReference>
<dbReference type="PhylomeDB" id="Q96RT8"/>
<dbReference type="TreeFam" id="TF329759"/>
<dbReference type="PathwayCommons" id="Q96RT8"/>
<dbReference type="Reactome" id="R-HSA-380270">
    <property type="pathway name" value="Recruitment of mitotic centrosome proteins and complexes"/>
</dbReference>
<dbReference type="Reactome" id="R-HSA-380320">
    <property type="pathway name" value="Recruitment of NuMA to mitotic centrosomes"/>
</dbReference>
<dbReference type="SignaLink" id="Q96RT8"/>
<dbReference type="SIGNOR" id="Q96RT8"/>
<dbReference type="BioGRID-ORCS" id="114791">
    <property type="hits" value="723 hits in 1161 CRISPR screens"/>
</dbReference>
<dbReference type="CD-CODE" id="8C2F96ED">
    <property type="entry name" value="Centrosome"/>
</dbReference>
<dbReference type="ChiTaRS" id="TUBGCP5">
    <property type="organism name" value="human"/>
</dbReference>
<dbReference type="GeneWiki" id="TUBGCP5"/>
<dbReference type="GenomeRNAi" id="114791"/>
<dbReference type="Pharos" id="Q96RT8">
    <property type="development level" value="Tbio"/>
</dbReference>
<dbReference type="PRO" id="PR:Q96RT8"/>
<dbReference type="Proteomes" id="UP000005640">
    <property type="component" value="Chromosome 15"/>
</dbReference>
<dbReference type="RNAct" id="Q96RT8">
    <property type="molecule type" value="protein"/>
</dbReference>
<dbReference type="Bgee" id="ENSG00000275835">
    <property type="expression patterns" value="Expressed in sural nerve and 100 other cell types or tissues"/>
</dbReference>
<dbReference type="ExpressionAtlas" id="Q96RT8">
    <property type="expression patterns" value="baseline and differential"/>
</dbReference>
<dbReference type="GO" id="GO:0005813">
    <property type="term" value="C:centrosome"/>
    <property type="evidence" value="ECO:0000314"/>
    <property type="project" value="HPA"/>
</dbReference>
<dbReference type="GO" id="GO:0036064">
    <property type="term" value="C:ciliary basal body"/>
    <property type="evidence" value="ECO:0000314"/>
    <property type="project" value="HPA"/>
</dbReference>
<dbReference type="GO" id="GO:0005929">
    <property type="term" value="C:cilium"/>
    <property type="evidence" value="ECO:0000314"/>
    <property type="project" value="HPA"/>
</dbReference>
<dbReference type="GO" id="GO:0005829">
    <property type="term" value="C:cytosol"/>
    <property type="evidence" value="ECO:0000314"/>
    <property type="project" value="HPA"/>
</dbReference>
<dbReference type="GO" id="GO:0000930">
    <property type="term" value="C:gamma-tubulin complex"/>
    <property type="evidence" value="ECO:0000318"/>
    <property type="project" value="GO_Central"/>
</dbReference>
<dbReference type="GO" id="GO:0000931">
    <property type="term" value="C:gamma-tubulin ring complex"/>
    <property type="evidence" value="ECO:0000314"/>
    <property type="project" value="UniProtKB"/>
</dbReference>
<dbReference type="GO" id="GO:0005874">
    <property type="term" value="C:microtubule"/>
    <property type="evidence" value="ECO:0007669"/>
    <property type="project" value="UniProtKB-KW"/>
</dbReference>
<dbReference type="GO" id="GO:0000922">
    <property type="term" value="C:spindle pole"/>
    <property type="evidence" value="ECO:0007669"/>
    <property type="project" value="InterPro"/>
</dbReference>
<dbReference type="GO" id="GO:0043015">
    <property type="term" value="F:gamma-tubulin binding"/>
    <property type="evidence" value="ECO:0000318"/>
    <property type="project" value="GO_Central"/>
</dbReference>
<dbReference type="GO" id="GO:0008017">
    <property type="term" value="F:microtubule binding"/>
    <property type="evidence" value="ECO:0000314"/>
    <property type="project" value="UniProtKB"/>
</dbReference>
<dbReference type="GO" id="GO:0031122">
    <property type="term" value="P:cytoplasmic microtubule organization"/>
    <property type="evidence" value="ECO:0000318"/>
    <property type="project" value="GO_Central"/>
</dbReference>
<dbReference type="GO" id="GO:0051321">
    <property type="term" value="P:meiotic cell cycle"/>
    <property type="evidence" value="ECO:0000318"/>
    <property type="project" value="GO_Central"/>
</dbReference>
<dbReference type="GO" id="GO:0007020">
    <property type="term" value="P:microtubule nucleation"/>
    <property type="evidence" value="ECO:0000314"/>
    <property type="project" value="UniProtKB"/>
</dbReference>
<dbReference type="GO" id="GO:0000278">
    <property type="term" value="P:mitotic cell cycle"/>
    <property type="evidence" value="ECO:0000318"/>
    <property type="project" value="GO_Central"/>
</dbReference>
<dbReference type="GO" id="GO:0051225">
    <property type="term" value="P:spindle assembly"/>
    <property type="evidence" value="ECO:0000318"/>
    <property type="project" value="GO_Central"/>
</dbReference>
<dbReference type="CDD" id="cd22572">
    <property type="entry name" value="GCP5_NTD"/>
    <property type="match status" value="1"/>
</dbReference>
<dbReference type="FunFam" id="1.20.120.1900:FF:000005">
    <property type="entry name" value="Gamma-tubulin complex component"/>
    <property type="match status" value="1"/>
</dbReference>
<dbReference type="Gene3D" id="1.20.120.1900">
    <property type="entry name" value="Gamma-tubulin complex, C-terminal domain"/>
    <property type="match status" value="1"/>
</dbReference>
<dbReference type="InterPro" id="IPR007259">
    <property type="entry name" value="GCP"/>
</dbReference>
<dbReference type="InterPro" id="IPR040457">
    <property type="entry name" value="GCP_C"/>
</dbReference>
<dbReference type="InterPro" id="IPR042241">
    <property type="entry name" value="GCP_C_sf"/>
</dbReference>
<dbReference type="InterPro" id="IPR041470">
    <property type="entry name" value="GCP_N"/>
</dbReference>
<dbReference type="PANTHER" id="PTHR19302">
    <property type="entry name" value="GAMMA TUBULIN COMPLEX PROTEIN"/>
    <property type="match status" value="1"/>
</dbReference>
<dbReference type="PANTHER" id="PTHR19302:SF33">
    <property type="entry name" value="GAMMA-TUBULIN COMPLEX COMPONENT 5"/>
    <property type="match status" value="1"/>
</dbReference>
<dbReference type="Pfam" id="PF04130">
    <property type="entry name" value="GCP_C_terminal"/>
    <property type="match status" value="1"/>
</dbReference>
<dbReference type="Pfam" id="PF17681">
    <property type="entry name" value="GCP_N_terminal"/>
    <property type="match status" value="1"/>
</dbReference>
<name>GCP5_HUMAN</name>
<organism>
    <name type="scientific">Homo sapiens</name>
    <name type="common">Human</name>
    <dbReference type="NCBI Taxonomy" id="9606"/>
    <lineage>
        <taxon>Eukaryota</taxon>
        <taxon>Metazoa</taxon>
        <taxon>Chordata</taxon>
        <taxon>Craniata</taxon>
        <taxon>Vertebrata</taxon>
        <taxon>Euteleostomi</taxon>
        <taxon>Mammalia</taxon>
        <taxon>Eutheria</taxon>
        <taxon>Euarchontoglires</taxon>
        <taxon>Primates</taxon>
        <taxon>Haplorrhini</taxon>
        <taxon>Catarrhini</taxon>
        <taxon>Hominidae</taxon>
        <taxon>Homo</taxon>
    </lineage>
</organism>
<accession>Q96RT8</accession>
<accession>E9PB12</accession>
<accession>Q6IQ52</accession>
<accession>Q96PY8</accession>
<keyword id="KW-0002">3D-structure</keyword>
<keyword id="KW-0025">Alternative splicing</keyword>
<keyword id="KW-0963">Cytoplasm</keyword>
<keyword id="KW-0206">Cytoskeleton</keyword>
<keyword id="KW-0493">Microtubule</keyword>
<keyword id="KW-1267">Proteomics identification</keyword>
<keyword id="KW-1185">Reference proteome</keyword>
<feature type="chain" id="PRO_0000078129" description="Gamma-tubulin complex component 5">
    <location>
        <begin position="1"/>
        <end position="1024"/>
    </location>
</feature>
<feature type="region of interest" description="Disordered" evidence="1">
    <location>
        <begin position="155"/>
        <end position="203"/>
    </location>
</feature>
<feature type="region of interest" description="Disordered" evidence="1">
    <location>
        <begin position="521"/>
        <end position="545"/>
    </location>
</feature>
<feature type="compositionally biased region" description="Basic and acidic residues" evidence="1">
    <location>
        <begin position="189"/>
        <end position="203"/>
    </location>
</feature>
<feature type="compositionally biased region" description="Low complexity" evidence="1">
    <location>
        <begin position="531"/>
        <end position="543"/>
    </location>
</feature>
<feature type="splice variant" id="VSP_047496" description="In isoform 2." evidence="7">
    <original>LESLALSLMAGMEQS</original>
    <variation>CEYIMLKYFYLCISL</variation>
    <location>
        <begin position="1010"/>
        <end position="1024"/>
    </location>
</feature>
<feature type="sequence variant" id="VAR_049252" description="In dbSNP:rs35612840.">
    <original>E</original>
    <variation>D</variation>
    <location>
        <position position="662"/>
    </location>
</feature>
<feature type="sequence conflict" description="In Ref. 6; AAH71560." evidence="8" ref="6">
    <original>R</original>
    <variation>G</variation>
    <location>
        <position position="198"/>
    </location>
</feature>
<feature type="sequence conflict" description="In Ref. 3; AK056416." evidence="8" ref="3">
    <original>L</original>
    <variation>F</variation>
    <location>
        <position position="994"/>
    </location>
</feature>
<feature type="helix" evidence="14">
    <location>
        <begin position="14"/>
        <end position="27"/>
    </location>
</feature>
<feature type="helix" evidence="14">
    <location>
        <begin position="35"/>
        <end position="49"/>
    </location>
</feature>
<feature type="helix" evidence="14">
    <location>
        <begin position="58"/>
        <end position="74"/>
    </location>
</feature>
<feature type="helix" evidence="14">
    <location>
        <begin position="78"/>
        <end position="91"/>
    </location>
</feature>
<feature type="helix" evidence="14">
    <location>
        <begin position="106"/>
        <end position="117"/>
    </location>
</feature>
<proteinExistence type="evidence at protein level"/>
<comment type="function">
    <text evidence="4 5 6">Component of the gamma-tubulin ring complex (gTuRC) which mediates microtubule nucleation (PubMed:38305685, PubMed:38609661, PubMed:39321809). The gTuRC regulates the minus-end nucleation of alpha-beta tubulin heterodimers that grow into microtubule protafilaments, a critical step in centrosome duplication and spindle formation (PubMed:38305685, PubMed:38609661, PubMed:39321809).</text>
</comment>
<comment type="subunit">
    <text evidence="4 5">Component of the gamma-tubulin ring complex (gTuRC) consisting of TUBGCP2, TUBGCP3, TUBGCP4, TUBGCP5 and TUBGCP6 and gamma-tubulin TUBG1 or TUBG2 (PubMed:39321809, PubMed:38609661, PubMed:38305685). TUBGCP2, TUBGCP3, TUBGCP4, TUBGCP5 and TUBGCP6 assemble in a 5:5:2:1:1 stoichiometry; each is associated with a gamma-tubulin, thereby arranging 14 gamma-tubulins in a helical manner (PubMed:39321809, PubMed:38609661, PubMed:38305685). Gamma-tubulin at the first position is blocked by TUBGCP3 at the last position, allowing 13 protafilaments to grow into a microtubule (PubMed:39321809, PubMed:38609661, PubMed:38305685). The gTuRC (via TUBGCP3 and TUBGCP6) interacts with ACTB and MZT1; the interactions form a luminal bridge that stabilizes the initial structure during complex assembly (PubMed:39321809, PubMed:38609661). The gTuRC (via TUBGCP2) interacts with MZT2A/MZT2B and CDK5RAP2 (via CM1 motif); the interactions play a role in gTuRC activation (PubMed:39321809).</text>
</comment>
<comment type="interaction">
    <interactant intactId="EBI-2555061">
        <id>Q96RT8</id>
    </interactant>
    <interactant intactId="EBI-10329202">
        <id>Q9Y5R4</id>
        <label>HEMK1</label>
    </interactant>
    <organismsDiffer>false</organismsDiffer>
    <experiments>3</experiments>
</comment>
<comment type="subcellular location">
    <subcellularLocation>
        <location evidence="3">Cytoplasm</location>
        <location evidence="3">Cytoskeleton</location>
        <location evidence="3">Microtubule organizing center</location>
        <location evidence="3">Centrosome</location>
    </subcellularLocation>
</comment>
<comment type="alternative products">
    <event type="alternative splicing"/>
    <isoform>
        <id>Q96RT8-1</id>
        <name>1</name>
        <sequence type="displayed"/>
    </isoform>
    <isoform>
        <id>Q96RT8-2</id>
        <name>2</name>
        <sequence type="described" ref="VSP_047496"/>
    </isoform>
</comment>
<comment type="tissue specificity">
    <text evidence="2">Widely expressed, with highest levels in heart and skeletal muscle and moderate levels in brain.</text>
</comment>
<comment type="similarity">
    <text evidence="8">Belongs to the TUBGCP family.</text>
</comment>
<comment type="sequence caution" evidence="8">
    <conflict type="erroneous initiation">
        <sequence resource="EMBL-CDS" id="AAH46182"/>
    </conflict>
</comment>
<comment type="sequence caution" evidence="8">
    <conflict type="erroneous termination">
        <sequence resource="EMBL" id="AK056416"/>
    </conflict>
    <text>Truncated C-terminus.</text>
</comment>
<comment type="sequence caution" evidence="8">
    <conflict type="frameshift">
        <sequence resource="EMBL" id="AK056416"/>
    </conflict>
</comment>
<comment type="sequence caution" evidence="8">
    <conflict type="erroneous initiation">
        <sequence resource="EMBL-CDS" id="BAB67792"/>
    </conflict>
</comment>
<protein>
    <recommendedName>
        <fullName>Gamma-tubulin complex component 5</fullName>
        <shortName>GCP-5</shortName>
    </recommendedName>
</protein>
<gene>
    <name type="primary">TUBGCP5</name>
    <name type="synonym">GCP5</name>
    <name type="synonym">KIAA1899</name>
</gene>
<reference key="1">
    <citation type="journal article" date="2001" name="Mol. Biol. Cell">
        <title>GCP5 and GCP6: two new members of the human gamma-tubulin complex.</title>
        <authorList>
            <person name="Murphy S.M."/>
            <person name="Preble A.M."/>
            <person name="Patel U.K."/>
            <person name="O'Connell K.L."/>
            <person name="Dias D.P."/>
            <person name="Moritz M."/>
            <person name="Agard D."/>
            <person name="Stults J.T."/>
            <person name="Stearns T."/>
        </authorList>
    </citation>
    <scope>NUCLEOTIDE SEQUENCE [MRNA] (ISOFORM 1)</scope>
    <scope>CHARACTERIZATION</scope>
</reference>
<reference key="2">
    <citation type="journal article" date="2001" name="DNA Res.">
        <title>Prediction of the coding sequences of unidentified human genes. XXI. The complete sequences of 60 new cDNA clones from brain which code for large proteins.</title>
        <authorList>
            <person name="Nagase T."/>
            <person name="Kikuno R."/>
            <person name="Ohara O."/>
        </authorList>
    </citation>
    <scope>NUCLEOTIDE SEQUENCE [LARGE SCALE MRNA] (ISOFORM 1)</scope>
    <source>
        <tissue>Brain</tissue>
    </source>
</reference>
<reference key="3">
    <citation type="journal article" date="2004" name="Nat. Genet.">
        <title>Complete sequencing and characterization of 21,243 full-length human cDNAs.</title>
        <authorList>
            <person name="Ota T."/>
            <person name="Suzuki Y."/>
            <person name="Nishikawa T."/>
            <person name="Otsuki T."/>
            <person name="Sugiyama T."/>
            <person name="Irie R."/>
            <person name="Wakamatsu A."/>
            <person name="Hayashi K."/>
            <person name="Sato H."/>
            <person name="Nagai K."/>
            <person name="Kimura K."/>
            <person name="Makita H."/>
            <person name="Sekine M."/>
            <person name="Obayashi M."/>
            <person name="Nishi T."/>
            <person name="Shibahara T."/>
            <person name="Tanaka T."/>
            <person name="Ishii S."/>
            <person name="Yamamoto J."/>
            <person name="Saito K."/>
            <person name="Kawai Y."/>
            <person name="Isono Y."/>
            <person name="Nakamura Y."/>
            <person name="Nagahari K."/>
            <person name="Murakami K."/>
            <person name="Yasuda T."/>
            <person name="Iwayanagi T."/>
            <person name="Wagatsuma M."/>
            <person name="Shiratori A."/>
            <person name="Sudo H."/>
            <person name="Hosoiri T."/>
            <person name="Kaku Y."/>
            <person name="Kodaira H."/>
            <person name="Kondo H."/>
            <person name="Sugawara M."/>
            <person name="Takahashi M."/>
            <person name="Kanda K."/>
            <person name="Yokoi T."/>
            <person name="Furuya T."/>
            <person name="Kikkawa E."/>
            <person name="Omura Y."/>
            <person name="Abe K."/>
            <person name="Kamihara K."/>
            <person name="Katsuta N."/>
            <person name="Sato K."/>
            <person name="Tanikawa M."/>
            <person name="Yamazaki M."/>
            <person name="Ninomiya K."/>
            <person name="Ishibashi T."/>
            <person name="Yamashita H."/>
            <person name="Murakawa K."/>
            <person name="Fujimori K."/>
            <person name="Tanai H."/>
            <person name="Kimata M."/>
            <person name="Watanabe M."/>
            <person name="Hiraoka S."/>
            <person name="Chiba Y."/>
            <person name="Ishida S."/>
            <person name="Ono Y."/>
            <person name="Takiguchi S."/>
            <person name="Watanabe S."/>
            <person name="Yosida M."/>
            <person name="Hotuta T."/>
            <person name="Kusano J."/>
            <person name="Kanehori K."/>
            <person name="Takahashi-Fujii A."/>
            <person name="Hara H."/>
            <person name="Tanase T.-O."/>
            <person name="Nomura Y."/>
            <person name="Togiya S."/>
            <person name="Komai F."/>
            <person name="Hara R."/>
            <person name="Takeuchi K."/>
            <person name="Arita M."/>
            <person name="Imose N."/>
            <person name="Musashino K."/>
            <person name="Yuuki H."/>
            <person name="Oshima A."/>
            <person name="Sasaki N."/>
            <person name="Aotsuka S."/>
            <person name="Yoshikawa Y."/>
            <person name="Matsunawa H."/>
            <person name="Ichihara T."/>
            <person name="Shiohata N."/>
            <person name="Sano S."/>
            <person name="Moriya S."/>
            <person name="Momiyama H."/>
            <person name="Satoh N."/>
            <person name="Takami S."/>
            <person name="Terashima Y."/>
            <person name="Suzuki O."/>
            <person name="Nakagawa S."/>
            <person name="Senoh A."/>
            <person name="Mizoguchi H."/>
            <person name="Goto Y."/>
            <person name="Shimizu F."/>
            <person name="Wakebe H."/>
            <person name="Hishigaki H."/>
            <person name="Watanabe T."/>
            <person name="Sugiyama A."/>
            <person name="Takemoto M."/>
            <person name="Kawakami B."/>
            <person name="Yamazaki M."/>
            <person name="Watanabe K."/>
            <person name="Kumagai A."/>
            <person name="Itakura S."/>
            <person name="Fukuzumi Y."/>
            <person name="Fujimori Y."/>
            <person name="Komiyama M."/>
            <person name="Tashiro H."/>
            <person name="Tanigami A."/>
            <person name="Fujiwara T."/>
            <person name="Ono T."/>
            <person name="Yamada K."/>
            <person name="Fujii Y."/>
            <person name="Ozaki K."/>
            <person name="Hirao M."/>
            <person name="Ohmori Y."/>
            <person name="Kawabata A."/>
            <person name="Hikiji T."/>
            <person name="Kobatake N."/>
            <person name="Inagaki H."/>
            <person name="Ikema Y."/>
            <person name="Okamoto S."/>
            <person name="Okitani R."/>
            <person name="Kawakami T."/>
            <person name="Noguchi S."/>
            <person name="Itoh T."/>
            <person name="Shigeta K."/>
            <person name="Senba T."/>
            <person name="Matsumura K."/>
            <person name="Nakajima Y."/>
            <person name="Mizuno T."/>
            <person name="Morinaga M."/>
            <person name="Sasaki M."/>
            <person name="Togashi T."/>
            <person name="Oyama M."/>
            <person name="Hata H."/>
            <person name="Watanabe M."/>
            <person name="Komatsu T."/>
            <person name="Mizushima-Sugano J."/>
            <person name="Satoh T."/>
            <person name="Shirai Y."/>
            <person name="Takahashi Y."/>
            <person name="Nakagawa K."/>
            <person name="Okumura K."/>
            <person name="Nagase T."/>
            <person name="Nomura N."/>
            <person name="Kikuchi H."/>
            <person name="Masuho Y."/>
            <person name="Yamashita R."/>
            <person name="Nakai K."/>
            <person name="Yada T."/>
            <person name="Nakamura Y."/>
            <person name="Ohara O."/>
            <person name="Isogai T."/>
            <person name="Sugano S."/>
        </authorList>
    </citation>
    <scope>NUCLEOTIDE SEQUENCE [LARGE SCALE MRNA] (ISOFORM 2)</scope>
    <source>
        <tissue>Teratocarcinoma</tissue>
    </source>
</reference>
<reference key="4">
    <citation type="journal article" date="2006" name="Nature">
        <title>Analysis of the DNA sequence and duplication history of human chromosome 15.</title>
        <authorList>
            <person name="Zody M.C."/>
            <person name="Garber M."/>
            <person name="Sharpe T."/>
            <person name="Young S.K."/>
            <person name="Rowen L."/>
            <person name="O'Neill K."/>
            <person name="Whittaker C.A."/>
            <person name="Kamal M."/>
            <person name="Chang J.L."/>
            <person name="Cuomo C.A."/>
            <person name="Dewar K."/>
            <person name="FitzGerald M.G."/>
            <person name="Kodira C.D."/>
            <person name="Madan A."/>
            <person name="Qin S."/>
            <person name="Yang X."/>
            <person name="Abbasi N."/>
            <person name="Abouelleil A."/>
            <person name="Arachchi H.M."/>
            <person name="Baradarani L."/>
            <person name="Birditt B."/>
            <person name="Bloom S."/>
            <person name="Bloom T."/>
            <person name="Borowsky M.L."/>
            <person name="Burke J."/>
            <person name="Butler J."/>
            <person name="Cook A."/>
            <person name="DeArellano K."/>
            <person name="DeCaprio D."/>
            <person name="Dorris L. III"/>
            <person name="Dors M."/>
            <person name="Eichler E.E."/>
            <person name="Engels R."/>
            <person name="Fahey J."/>
            <person name="Fleetwood P."/>
            <person name="Friedman C."/>
            <person name="Gearin G."/>
            <person name="Hall J.L."/>
            <person name="Hensley G."/>
            <person name="Johnson E."/>
            <person name="Jones C."/>
            <person name="Kamat A."/>
            <person name="Kaur A."/>
            <person name="Locke D.P."/>
            <person name="Madan A."/>
            <person name="Munson G."/>
            <person name="Jaffe D.B."/>
            <person name="Lui A."/>
            <person name="Macdonald P."/>
            <person name="Mauceli E."/>
            <person name="Naylor J.W."/>
            <person name="Nesbitt R."/>
            <person name="Nicol R."/>
            <person name="O'Leary S.B."/>
            <person name="Ratcliffe A."/>
            <person name="Rounsley S."/>
            <person name="She X."/>
            <person name="Sneddon K.M.B."/>
            <person name="Stewart S."/>
            <person name="Sougnez C."/>
            <person name="Stone S.M."/>
            <person name="Topham K."/>
            <person name="Vincent D."/>
            <person name="Wang S."/>
            <person name="Zimmer A.R."/>
            <person name="Birren B.W."/>
            <person name="Hood L."/>
            <person name="Lander E.S."/>
            <person name="Nusbaum C."/>
        </authorList>
    </citation>
    <scope>NUCLEOTIDE SEQUENCE [LARGE SCALE GENOMIC DNA]</scope>
</reference>
<reference key="5">
    <citation type="submission" date="2003-01" db="EMBL/GenBank/DDBJ databases">
        <authorList>
            <person name="Ohara O."/>
            <person name="Nagase T."/>
            <person name="Kikuno R."/>
        </authorList>
    </citation>
    <scope>SEQUENCE REVISION</scope>
</reference>
<reference key="6">
    <citation type="journal article" date="2004" name="Genome Res.">
        <title>The status, quality, and expansion of the NIH full-length cDNA project: the Mammalian Gene Collection (MGC).</title>
        <authorList>
            <consortium name="The MGC Project Team"/>
        </authorList>
    </citation>
    <scope>NUCLEOTIDE SEQUENCE [LARGE SCALE MRNA] (ISOFORM 1)</scope>
    <source>
        <tissue>Brain</tissue>
        <tissue>Testis</tissue>
    </source>
</reference>
<reference key="7">
    <citation type="journal article" date="2003" name="Am. J. Hum. Genet.">
        <title>Identification of four highly conserved genes between breakpoint hotspots BP1 and BP2 of the Prader-Willi/Angelman syndromes deletion region that have undergone evolutionary transposition mediated by flanking duplicons.</title>
        <authorList>
            <person name="Chai J.-H."/>
            <person name="Locke D.P."/>
            <person name="Greally J.M."/>
            <person name="Knoll J.H.M."/>
            <person name="Ohta T."/>
            <person name="Dunai J."/>
            <person name="Yavor A."/>
            <person name="Eichler E.E."/>
            <person name="Nicholls R.D."/>
        </authorList>
    </citation>
    <scope>TISSUE SPECIFICITY</scope>
</reference>
<reference key="8">
    <citation type="journal article" date="2003" name="Nature">
        <title>Proteomic characterization of the human centrosome by protein correlation profiling.</title>
        <authorList>
            <person name="Andersen J.S."/>
            <person name="Wilkinson C.J."/>
            <person name="Mayor T."/>
            <person name="Mortensen P."/>
            <person name="Nigg E.A."/>
            <person name="Mann M."/>
        </authorList>
    </citation>
    <scope>IDENTIFICATION BY MASS SPECTROMETRY</scope>
    <scope>SUBCELLULAR LOCATION [LARGE SCALE ANALYSIS]</scope>
    <source>
        <tissue>Lymphoblast</tissue>
    </source>
</reference>
<reference key="9">
    <citation type="journal article" date="2011" name="BMC Syst. Biol.">
        <title>Initial characterization of the human central proteome.</title>
        <authorList>
            <person name="Burkard T.R."/>
            <person name="Planyavsky M."/>
            <person name="Kaupe I."/>
            <person name="Breitwieser F.P."/>
            <person name="Buerckstuemmer T."/>
            <person name="Bennett K.L."/>
            <person name="Superti-Furga G."/>
            <person name="Colinge J."/>
        </authorList>
    </citation>
    <scope>IDENTIFICATION BY MASS SPECTROMETRY [LARGE SCALE ANALYSIS]</scope>
</reference>
<reference evidence="10" key="10">
    <citation type="journal article" date="2024" name="Dev. Cell">
        <title>CDK5RAP2 activates microtubule nucleator gammaTuRC by facilitating template formation and actin release.</title>
        <authorList>
            <person name="Serna M."/>
            <person name="Zimmermann F."/>
            <person name="Vineethakumari C."/>
            <person name="Gonzalez-Rodriguez N."/>
            <person name="Llorca O."/>
            <person name="Luders J."/>
        </authorList>
    </citation>
    <scope>STRUCTURE BY ELECTRON MICROSCOPY (3.57 ANGSTROMS) OF THE GAMMA-TUBULIN RING COMPLEX IN COMPLEX WITH MZT1; MZT2A; CDK5RAP2 AND ACTB</scope>
    <scope>FUNCTION</scope>
    <scope>SUBUNIT</scope>
</reference>
<reference evidence="11 12 13" key="11">
    <citation type="journal article" date="2024" name="Nat. Struct. Mol. Biol.">
        <title>Structure of the gamma-tubulin ring complex-capped microtubule.</title>
        <authorList>
            <person name="Aher A."/>
            <person name="Urnavicius L."/>
            <person name="Xue A."/>
            <person name="Neselu K."/>
            <person name="Kapoor T.M."/>
        </authorList>
    </citation>
    <scope>STRUCTURE BY ELECTRON MICROSCOPY (7.00 ANGSTROMS) OF THE GAMMA-TUBULIN RING COMPLEX IN COMPLEX WITH MZT1; ACTB; TUBA1B AND TUBB3</scope>
    <scope>FUNCTION</scope>
    <scope>SUBUNIT</scope>
</reference>
<reference evidence="9" key="12">
    <citation type="journal article" date="2024" name="Science">
        <title>Transition of human gamma-tubulin ring complex into a closed conformation during microtubule nucleation.</title>
        <authorList>
            <person name="Brito C."/>
            <person name="Serna M."/>
            <person name="Guerra P."/>
            <person name="Llorca O."/>
            <person name="Surrey T."/>
        </authorList>
    </citation>
    <scope>STRUCTURE BY ELECTRON MICROSCOPY (3.72 ANGSTROMS) OF THE GAMMA-TUBULIN RING COMPLEX</scope>
    <scope>FUNCTION</scope>
    <scope>SUBUNIT</scope>
</reference>
<evidence type="ECO:0000256" key="1">
    <source>
        <dbReference type="SAM" id="MobiDB-lite"/>
    </source>
</evidence>
<evidence type="ECO:0000269" key="2">
    <source>
    </source>
</evidence>
<evidence type="ECO:0000269" key="3">
    <source>
    </source>
</evidence>
<evidence type="ECO:0000269" key="4">
    <source>
    </source>
</evidence>
<evidence type="ECO:0000269" key="5">
    <source>
    </source>
</evidence>
<evidence type="ECO:0000269" key="6">
    <source>
    </source>
</evidence>
<evidence type="ECO:0000303" key="7">
    <source>
    </source>
</evidence>
<evidence type="ECO:0000305" key="8"/>
<evidence type="ECO:0007744" key="9">
    <source>
        <dbReference type="PDB" id="8Q62"/>
    </source>
</evidence>
<evidence type="ECO:0007744" key="10">
    <source>
        <dbReference type="PDB" id="8RX1"/>
    </source>
</evidence>
<evidence type="ECO:0007744" key="11">
    <source>
        <dbReference type="PDB" id="8VRD"/>
    </source>
</evidence>
<evidence type="ECO:0007744" key="12">
    <source>
        <dbReference type="PDB" id="8VRJ"/>
    </source>
</evidence>
<evidence type="ECO:0007744" key="13">
    <source>
        <dbReference type="PDB" id="8VRK"/>
    </source>
</evidence>
<evidence type="ECO:0007829" key="14">
    <source>
        <dbReference type="PDB" id="6L81"/>
    </source>
</evidence>